<feature type="chain" id="PRO_0000461364" description="Dihydroniloticin synthase CYP71CD2">
    <location>
        <begin position="1"/>
        <end position="512"/>
    </location>
</feature>
<feature type="transmembrane region" description="Helical" evidence="2">
    <location>
        <begin position="1"/>
        <end position="21"/>
    </location>
</feature>
<feature type="binding site" description="axial binding residue" evidence="1">
    <location>
        <position position="436"/>
    </location>
    <ligand>
        <name>heme</name>
        <dbReference type="ChEBI" id="CHEBI:30413"/>
    </ligand>
    <ligandPart>
        <name>Fe</name>
        <dbReference type="ChEBI" id="CHEBI:18248"/>
    </ligandPart>
</feature>
<accession>A0A5B8NBK9</accession>
<gene>
    <name evidence="4" type="primary">CYP71CD2</name>
</gene>
<reference key="1">
    <citation type="journal article" date="2019" name="Proc. Natl. Acad. Sci. U.S.A.">
        <title>Identification of key enzymes responsible for protolimonoid biosynthesis in plants: Opening the door to azadirachtin production.</title>
        <authorList>
            <person name="Hodgson H."/>
            <person name="De La Pena R."/>
            <person name="Stephenson M.J."/>
            <person name="Thimmappa R."/>
            <person name="Vincent J.L."/>
            <person name="Sattely E.S."/>
            <person name="Osbourn A."/>
        </authorList>
    </citation>
    <scope>NUCLEOTIDE SEQUENCE [MRNA]</scope>
    <scope>FUNCTION</scope>
    <scope>CATALYTIC ACTIVITY</scope>
    <scope>PATHWAY</scope>
    <scope>TISSUE SPECIFICITY</scope>
</reference>
<keyword id="KW-0349">Heme</keyword>
<keyword id="KW-0408">Iron</keyword>
<keyword id="KW-0472">Membrane</keyword>
<keyword id="KW-0479">Metal-binding</keyword>
<keyword id="KW-0503">Monooxygenase</keyword>
<keyword id="KW-0560">Oxidoreductase</keyword>
<keyword id="KW-0812">Transmembrane</keyword>
<keyword id="KW-1133">Transmembrane helix</keyword>
<sequence>MNLQLDYFSITSFLVFLVVLFRIVSDWNKKSTNLRLPPGPSKLPIIGSVHHMIGLDVDLPYHALTDLAKKYGPLMHLQLGQMSLVVASSAKMFKELMKENDLAISQRPVPYVARVLNDAGRDIAFVPYGDYWRQIRKISRMELFSVRKVQSLYYIREDQSNKMIDAIGGSAETVMNLSKAVSDYTSTVVARAAFGSGCKDQDKFIKLSLEMVAAAGAVSTLPDMFPALGFIPVLSGKKAFLQNIQKEADKILDYIIDEHIQRTKSKDYDGKESDKEDIVDVLLRLEKTGELEIPITTPDIKAVIWSVFAGGTDTSSTTTLWAMSELMRNPKVMEKVQAEVREKLKGKKEILEADIQDLPYMRAVIKETLRLRIPGPLLLPRETMEPIEVDGYVIPEKTKILFNAWAVTRDPELWENPESFIPERFIEKQIDFKGTNYEFTPFGSGRRICPGMNFGIANVELPLAKLLYYFNWQLPHGMKPEDLDMTAKFGVVCGRKNDLFLIPTPYNIEVEN</sequence>
<protein>
    <recommendedName>
        <fullName evidence="4">Dihydroniloticin synthase CYP71CD2</fullName>
        <ecNumber evidence="4">1.14.14.-</ecNumber>
    </recommendedName>
    <alternativeName>
        <fullName evidence="4">Cytochrome P450 family 71 subfamily CD polypeptide 2</fullName>
        <shortName evidence="4">MaCYP71CD2</shortName>
    </alternativeName>
</protein>
<evidence type="ECO:0000250" key="1">
    <source>
        <dbReference type="UniProtKB" id="Q96242"/>
    </source>
</evidence>
<evidence type="ECO:0000255" key="2"/>
<evidence type="ECO:0000269" key="3">
    <source>
    </source>
</evidence>
<evidence type="ECO:0000303" key="4">
    <source>
    </source>
</evidence>
<evidence type="ECO:0000305" key="5"/>
<organism>
    <name type="scientific">Melia azedarach</name>
    <name type="common">Chinaberry tree</name>
    <dbReference type="NCBI Taxonomy" id="155640"/>
    <lineage>
        <taxon>Eukaryota</taxon>
        <taxon>Viridiplantae</taxon>
        <taxon>Streptophyta</taxon>
        <taxon>Embryophyta</taxon>
        <taxon>Tracheophyta</taxon>
        <taxon>Spermatophyta</taxon>
        <taxon>Magnoliopsida</taxon>
        <taxon>eudicotyledons</taxon>
        <taxon>Gunneridae</taxon>
        <taxon>Pentapetalae</taxon>
        <taxon>rosids</taxon>
        <taxon>malvids</taxon>
        <taxon>Sapindales</taxon>
        <taxon>Meliaceae</taxon>
        <taxon>Melia</taxon>
    </lineage>
</organism>
<proteinExistence type="evidence at protein level"/>
<name>C1CD2_MELAZ</name>
<comment type="function">
    <text evidence="3">Monooxygenase involved in the biosynthesis of limonoids triterpene natural products such as azadirachtin, an antifeedant widely used as bioinsecticide, and possessing many medicinal applications including anti-tumoral, anti-malarial, anti-rheumatic, antibacterial, anti-inflammatory, anti-pyretic and diuretic effects (PubMed:31371503). Catalyzes the conversion of tirucalladienol to dihydroniloticin (PubMed:31371503).</text>
</comment>
<comment type="catalytic activity">
    <reaction evidence="3">
        <text>tirucalla-7,24-dien-3beta-ol + 2 reduced [NADPH--hemoprotein reductase] + 2 O2 = dihydroniloticin + 2 oxidized [NADPH--hemoprotein reductase] + 2 H2O + 2 H(+)</text>
        <dbReference type="Rhea" id="RHEA:80279"/>
        <dbReference type="Rhea" id="RHEA-COMP:11964"/>
        <dbReference type="Rhea" id="RHEA-COMP:11965"/>
        <dbReference type="ChEBI" id="CHEBI:15377"/>
        <dbReference type="ChEBI" id="CHEBI:15378"/>
        <dbReference type="ChEBI" id="CHEBI:15379"/>
        <dbReference type="ChEBI" id="CHEBI:57618"/>
        <dbReference type="ChEBI" id="CHEBI:58210"/>
        <dbReference type="ChEBI" id="CHEBI:63468"/>
        <dbReference type="ChEBI" id="CHEBI:231450"/>
    </reaction>
    <physiologicalReaction direction="left-to-right" evidence="3">
        <dbReference type="Rhea" id="RHEA:80280"/>
    </physiologicalReaction>
</comment>
<comment type="cofactor">
    <cofactor evidence="1">
        <name>heme</name>
        <dbReference type="ChEBI" id="CHEBI:30413"/>
    </cofactor>
</comment>
<comment type="pathway">
    <text evidence="3">Secondary metabolite biosynthesis; terpenoid biosynthesis.</text>
</comment>
<comment type="subcellular location">
    <subcellularLocation>
        <location evidence="2">Membrane</location>
        <topology evidence="2">Single-pass membrane protein</topology>
    </subcellularLocation>
</comment>
<comment type="tissue specificity">
    <text evidence="3">Mainly expressed in petioles and roots, and, to a lower extent, in leaves.</text>
</comment>
<comment type="similarity">
    <text evidence="5">Belongs to the cytochrome P450 family.</text>
</comment>
<dbReference type="EC" id="1.14.14.-" evidence="4"/>
<dbReference type="EMBL" id="MK803271">
    <property type="protein sequence ID" value="QDZ36314.1"/>
    <property type="molecule type" value="mRNA"/>
</dbReference>
<dbReference type="SMR" id="A0A5B8NBK9"/>
<dbReference type="OrthoDB" id="1055148at2759"/>
<dbReference type="UniPathway" id="UPA00213"/>
<dbReference type="GO" id="GO:0016020">
    <property type="term" value="C:membrane"/>
    <property type="evidence" value="ECO:0007669"/>
    <property type="project" value="UniProtKB-SubCell"/>
</dbReference>
<dbReference type="GO" id="GO:0020037">
    <property type="term" value="F:heme binding"/>
    <property type="evidence" value="ECO:0007669"/>
    <property type="project" value="InterPro"/>
</dbReference>
<dbReference type="GO" id="GO:0005506">
    <property type="term" value="F:iron ion binding"/>
    <property type="evidence" value="ECO:0007669"/>
    <property type="project" value="InterPro"/>
</dbReference>
<dbReference type="GO" id="GO:0004497">
    <property type="term" value="F:monooxygenase activity"/>
    <property type="evidence" value="ECO:0007669"/>
    <property type="project" value="UniProtKB-KW"/>
</dbReference>
<dbReference type="GO" id="GO:0016705">
    <property type="term" value="F:oxidoreductase activity, acting on paired donors, with incorporation or reduction of molecular oxygen"/>
    <property type="evidence" value="ECO:0007669"/>
    <property type="project" value="InterPro"/>
</dbReference>
<dbReference type="CDD" id="cd11072">
    <property type="entry name" value="CYP71-like"/>
    <property type="match status" value="1"/>
</dbReference>
<dbReference type="FunFam" id="1.10.630.10:FF:000043">
    <property type="entry name" value="Cytochrome P450 99A2"/>
    <property type="match status" value="1"/>
</dbReference>
<dbReference type="Gene3D" id="1.10.630.10">
    <property type="entry name" value="Cytochrome P450"/>
    <property type="match status" value="1"/>
</dbReference>
<dbReference type="InterPro" id="IPR001128">
    <property type="entry name" value="Cyt_P450"/>
</dbReference>
<dbReference type="InterPro" id="IPR017972">
    <property type="entry name" value="Cyt_P450_CS"/>
</dbReference>
<dbReference type="InterPro" id="IPR002401">
    <property type="entry name" value="Cyt_P450_E_grp-I"/>
</dbReference>
<dbReference type="InterPro" id="IPR036396">
    <property type="entry name" value="Cyt_P450_sf"/>
</dbReference>
<dbReference type="PANTHER" id="PTHR47955">
    <property type="entry name" value="CYTOCHROME P450 FAMILY 71 PROTEIN"/>
    <property type="match status" value="1"/>
</dbReference>
<dbReference type="PANTHER" id="PTHR47955:SF9">
    <property type="entry name" value="PREMNASPIRODIENE OXYGENASE-LIKE"/>
    <property type="match status" value="1"/>
</dbReference>
<dbReference type="Pfam" id="PF00067">
    <property type="entry name" value="p450"/>
    <property type="match status" value="1"/>
</dbReference>
<dbReference type="PRINTS" id="PR00463">
    <property type="entry name" value="EP450I"/>
</dbReference>
<dbReference type="PRINTS" id="PR00385">
    <property type="entry name" value="P450"/>
</dbReference>
<dbReference type="SUPFAM" id="SSF48264">
    <property type="entry name" value="Cytochrome P450"/>
    <property type="match status" value="1"/>
</dbReference>
<dbReference type="PROSITE" id="PS00086">
    <property type="entry name" value="CYTOCHROME_P450"/>
    <property type="match status" value="1"/>
</dbReference>